<organism>
    <name type="scientific">Escherichia coli (strain K12)</name>
    <dbReference type="NCBI Taxonomy" id="83333"/>
    <lineage>
        <taxon>Bacteria</taxon>
        <taxon>Pseudomonadati</taxon>
        <taxon>Pseudomonadota</taxon>
        <taxon>Gammaproteobacteria</taxon>
        <taxon>Enterobacterales</taxon>
        <taxon>Enterobacteriaceae</taxon>
        <taxon>Escherichia</taxon>
    </lineage>
</organism>
<keyword id="KW-0997">Cell inner membrane</keyword>
<keyword id="KW-1003">Cell membrane</keyword>
<keyword id="KW-0444">Lipid biosynthesis</keyword>
<keyword id="KW-0443">Lipid metabolism</keyword>
<keyword id="KW-0472">Membrane</keyword>
<keyword id="KW-0594">Phospholipid biosynthesis</keyword>
<keyword id="KW-1208">Phospholipid metabolism</keyword>
<keyword id="KW-1185">Reference proteome</keyword>
<keyword id="KW-0808">Transferase</keyword>
<keyword id="KW-0812">Transmembrane</keyword>
<keyword id="KW-1133">Transmembrane helix</keyword>
<evidence type="ECO:0000255" key="1"/>
<evidence type="ECO:0000255" key="2">
    <source>
        <dbReference type="HAMAP-Rule" id="MF_01437"/>
    </source>
</evidence>
<evidence type="ECO:0000269" key="3">
    <source>
    </source>
</evidence>
<evidence type="ECO:0000269" key="4">
    <source>
    </source>
</evidence>
<evidence type="ECO:0000269" key="5">
    <source>
    </source>
</evidence>
<evidence type="ECO:0000269" key="6">
    <source>
    </source>
</evidence>
<evidence type="ECO:0000305" key="7"/>
<evidence type="ECO:0000305" key="8">
    <source>
    </source>
</evidence>
<comment type="function">
    <text evidence="4 6">Catalyzes the conversion of cytidine diphosphate diacylglycerol (CDP-DG) and glycerol 3-phosphate into phosphatidylglycerol (PubMed:3003065, PubMed:8824831). Essential for the synthesis of anionic phospholipids, thereby playing a role in balancing the ratio of zwitterionic and anionic phospholipids, which is thought to be important for normal membrane function (PubMed:3003065, PubMed:8824831).</text>
</comment>
<comment type="catalytic activity">
    <reaction evidence="4 6">
        <text>a CDP-1,2-diacyl-sn-glycerol + sn-glycerol 3-phosphate = a 1,2-diacyl-sn-glycero-3-phospho-(1'-sn-glycero-3'-phosphate) + CMP + H(+)</text>
        <dbReference type="Rhea" id="RHEA:12593"/>
        <dbReference type="ChEBI" id="CHEBI:15378"/>
        <dbReference type="ChEBI" id="CHEBI:57597"/>
        <dbReference type="ChEBI" id="CHEBI:58332"/>
        <dbReference type="ChEBI" id="CHEBI:60110"/>
        <dbReference type="ChEBI" id="CHEBI:60377"/>
        <dbReference type="EC" id="2.7.8.5"/>
    </reaction>
</comment>
<comment type="pathway">
    <text evidence="6">Phospholipid metabolism; phosphatidylglycerol biosynthesis; phosphatidylglycerol from CDP-diacylglycerol: step 1/2.</text>
</comment>
<comment type="subcellular location">
    <subcellularLocation>
        <location evidence="3">Cell inner membrane</location>
        <topology evidence="1">Multi-pass membrane protein</topology>
    </subcellularLocation>
</comment>
<comment type="PTM">
    <text evidence="4">The N-terminus is probably blocked.</text>
</comment>
<comment type="similarity">
    <text evidence="2 7">Belongs to the CDP-alcohol phosphatidyltransferase class-I family.</text>
</comment>
<gene>
    <name type="primary">pgsA</name>
    <name type="ordered locus">b1912</name>
    <name type="ordered locus">JW1897</name>
</gene>
<name>PGSA_ECOLI</name>
<reference key="1">
    <citation type="journal article" date="1986" name="J. Biol. Chem.">
        <title>Structure and expression of the gene locus encoding the phosphatidylglycerophosphate synthase of Escherichia coli.</title>
        <authorList>
            <person name="Gopalakrishnan A.S."/>
            <person name="Chen Y.-C."/>
            <person name="Temkin M."/>
            <person name="Dowhan W."/>
        </authorList>
    </citation>
    <scope>NUCLEOTIDE SEQUENCE [GENOMIC DNA]</scope>
    <scope>FUNCTION</scope>
    <scope>CATALYTIC ACTIVITY</scope>
</reference>
<reference key="2">
    <citation type="journal article" date="1994" name="J. Bacteriol.">
        <title>Primary structures of the wild-type and mutant alleles encoding the phosphatidylglycerophosphate synthase of Escherichia coli.</title>
        <authorList>
            <person name="Usui M."/>
            <person name="Sembongi H."/>
            <person name="Matsuzaki H."/>
            <person name="Matsumoto K."/>
            <person name="Shibuya I."/>
        </authorList>
    </citation>
    <scope>SEQUENCE REVISION</scope>
    <scope>MUTANTS PGSA3 AND PGSA10</scope>
    <source>
        <strain>K12 / W3110 / ATCC 27325 / DSM 5911</strain>
    </source>
</reference>
<reference key="3">
    <citation type="journal article" date="1996" name="DNA Res.">
        <title>A 460-kb DNA sequence of the Escherichia coli K-12 genome corresponding to the 40.1-50.0 min region on the linkage map.</title>
        <authorList>
            <person name="Itoh T."/>
            <person name="Aiba H."/>
            <person name="Baba T."/>
            <person name="Fujita K."/>
            <person name="Hayashi K."/>
            <person name="Inada T."/>
            <person name="Isono K."/>
            <person name="Kasai H."/>
            <person name="Kimura S."/>
            <person name="Kitakawa M."/>
            <person name="Kitagawa M."/>
            <person name="Makino K."/>
            <person name="Miki T."/>
            <person name="Mizobuchi K."/>
            <person name="Mori H."/>
            <person name="Mori T."/>
            <person name="Motomura K."/>
            <person name="Nakade S."/>
            <person name="Nakamura Y."/>
            <person name="Nashimoto H."/>
            <person name="Nishio Y."/>
            <person name="Oshima T."/>
            <person name="Saito N."/>
            <person name="Sampei G."/>
            <person name="Seki Y."/>
            <person name="Sivasundaram S."/>
            <person name="Tagami H."/>
            <person name="Takeda J."/>
            <person name="Takemoto K."/>
            <person name="Wada C."/>
            <person name="Yamamoto Y."/>
            <person name="Horiuchi T."/>
        </authorList>
    </citation>
    <scope>NUCLEOTIDE SEQUENCE [LARGE SCALE GENOMIC DNA]</scope>
    <source>
        <strain>K12 / W3110 / ATCC 27325 / DSM 5911</strain>
    </source>
</reference>
<reference key="4">
    <citation type="journal article" date="1997" name="Science">
        <title>The complete genome sequence of Escherichia coli K-12.</title>
        <authorList>
            <person name="Blattner F.R."/>
            <person name="Plunkett G. III"/>
            <person name="Bloch C.A."/>
            <person name="Perna N.T."/>
            <person name="Burland V."/>
            <person name="Riley M."/>
            <person name="Collado-Vides J."/>
            <person name="Glasner J.D."/>
            <person name="Rode C.K."/>
            <person name="Mayhew G.F."/>
            <person name="Gregor J."/>
            <person name="Davis N.W."/>
            <person name="Kirkpatrick H.A."/>
            <person name="Goeden M.A."/>
            <person name="Rose D.J."/>
            <person name="Mau B."/>
            <person name="Shao Y."/>
        </authorList>
    </citation>
    <scope>NUCLEOTIDE SEQUENCE [LARGE SCALE GENOMIC DNA]</scope>
    <source>
        <strain>K12 / MG1655 / ATCC 47076</strain>
    </source>
</reference>
<reference key="5">
    <citation type="journal article" date="2006" name="Mol. Syst. Biol.">
        <title>Highly accurate genome sequences of Escherichia coli K-12 strains MG1655 and W3110.</title>
        <authorList>
            <person name="Hayashi K."/>
            <person name="Morooka N."/>
            <person name="Yamamoto Y."/>
            <person name="Fujita K."/>
            <person name="Isono K."/>
            <person name="Choi S."/>
            <person name="Ohtsubo E."/>
            <person name="Baba T."/>
            <person name="Wanner B.L."/>
            <person name="Mori H."/>
            <person name="Horiuchi T."/>
        </authorList>
    </citation>
    <scope>NUCLEOTIDE SEQUENCE [LARGE SCALE GENOMIC DNA]</scope>
    <source>
        <strain>K12 / W3110 / ATCC 27325 / DSM 5911</strain>
    </source>
</reference>
<reference key="6">
    <citation type="journal article" date="1992" name="Methods Enzymol.">
        <title>Phosphatidylglycerophosphate synthase from Escherichia coli.</title>
        <authorList>
            <person name="Dowhan W."/>
        </authorList>
    </citation>
    <scope>REVIEW</scope>
</reference>
<reference key="7">
    <citation type="journal article" date="1996" name="Biosci. Biotechnol. Biochem.">
        <title>A regulatory mechanism for the balanced synthesis of membrane phospholipid species in Escherichia coli.</title>
        <authorList>
            <person name="Saha S.K."/>
            <person name="Nishijima S."/>
            <person name="Matsuzaki H."/>
            <person name="Shibuya I."/>
            <person name="Matsumoto K."/>
        </authorList>
    </citation>
    <scope>FUNCTION</scope>
    <scope>CATALYTIC ACTIVITY</scope>
    <scope>PATHWAY</scope>
    <scope>MUTAGENESIS OF THR-60</scope>
</reference>
<reference key="8">
    <citation type="journal article" date="2005" name="Science">
        <title>Global topology analysis of the Escherichia coli inner membrane proteome.</title>
        <authorList>
            <person name="Daley D.O."/>
            <person name="Rapp M."/>
            <person name="Granseth E."/>
            <person name="Melen K."/>
            <person name="Drew D."/>
            <person name="von Heijne G."/>
        </authorList>
    </citation>
    <scope>TOPOLOGY [LARGE SCALE ANALYSIS]</scope>
    <scope>SUBCELLULAR LOCATION</scope>
    <source>
        <strain>K12 / MG1655 / ATCC 47076</strain>
    </source>
</reference>
<reference key="9">
    <citation type="journal article" date="1996" name="Eur. J. Biochem.">
        <title>Two-dimensional 1H-NMR of transmembrane peptides from Escherichia coli phosphatidylglycerophosphate synthase in micelles.</title>
        <authorList>
            <person name="Morein S."/>
            <person name="Trouard T.P."/>
            <person name="Hauksson J.B."/>
            <person name="Arvidson G."/>
            <person name="Lindblom G."/>
        </authorList>
    </citation>
    <scope>STRUCTURE BY NMR OF 6-25 AND 149-176</scope>
</reference>
<sequence>MQFNIPTLLTLFRVILIPFFVLVFYLPVTWSPFAAALIFCVAAVTDWFDGFLARRWNQSTRFGAFLDPVADKVLVAIAMVLVTEHYHSWWVTLPAATMIAREIIISALREWMAELGKRSSVAVSWIGKVKTTAQMVALAWLLWRPNIWVEYAGIALFFVAAVLTLWSMLQYLSAARADLLDQ</sequence>
<protein>
    <recommendedName>
        <fullName>CDP-diacylglycerol--glycerol-3-phosphate 3-phosphatidyltransferase</fullName>
        <ecNumber evidence="4 6">2.7.8.5</ecNumber>
    </recommendedName>
    <alternativeName>
        <fullName>Phosphatidylglycerophosphate synthase</fullName>
        <shortName>PGP synthase</shortName>
    </alternativeName>
</protein>
<accession>P0ABF8</accession>
<accession>P06978</accession>
<feature type="initiator methionine" description="Removed" evidence="8">
    <location>
        <position position="1"/>
    </location>
</feature>
<feature type="chain" id="PRO_0000056773" description="CDP-diacylglycerol--glycerol-3-phosphate 3-phosphatidyltransferase">
    <location>
        <begin position="2"/>
        <end position="182"/>
    </location>
</feature>
<feature type="topological domain" description="Cytoplasmic" evidence="1">
    <location>
        <begin position="2"/>
        <end position="13"/>
    </location>
</feature>
<feature type="transmembrane region" description="Helical" evidence="1">
    <location>
        <begin position="14"/>
        <end position="38"/>
    </location>
</feature>
<feature type="topological domain" description="Periplasmic" evidence="1">
    <location>
        <begin position="39"/>
        <end position="61"/>
    </location>
</feature>
<feature type="transmembrane region" description="Helical" evidence="1">
    <location>
        <begin position="62"/>
        <end position="82"/>
    </location>
</feature>
<feature type="topological domain" description="Cytoplasmic" evidence="1">
    <location>
        <begin position="83"/>
        <end position="87"/>
    </location>
</feature>
<feature type="transmembrane region" description="Helical" evidence="1">
    <location>
        <begin position="88"/>
        <end position="108"/>
    </location>
</feature>
<feature type="topological domain" description="Periplasmic" evidence="1">
    <location>
        <begin position="109"/>
        <end position="146"/>
    </location>
</feature>
<feature type="transmembrane region" description="Helical" evidence="1">
    <location>
        <begin position="147"/>
        <end position="169"/>
    </location>
</feature>
<feature type="topological domain" description="Cytoplasmic" evidence="1">
    <location>
        <begin position="170"/>
        <end position="182"/>
    </location>
</feature>
<feature type="mutagenesis site" description="In pgsA3; lowers activity, increases phosphatidic acid levels and reduces both the acidic phospholipids in the membrane and the total levels of phospholipids. Reduces the membrane-association of phosphatidylserine synthase PssA." evidence="5 6">
    <original>T</original>
    <variation>P</variation>
    <location>
        <position position="60"/>
    </location>
</feature>
<feature type="mutagenesis site" description="In pgsA10; lower activity." evidence="5">
    <original>T</original>
    <variation>I</variation>
    <location>
        <position position="92"/>
    </location>
</feature>
<dbReference type="EC" id="2.7.8.5" evidence="4 6"/>
<dbReference type="EMBL" id="M12299">
    <property type="protein sequence ID" value="AAA98754.1"/>
    <property type="molecule type" value="Genomic_DNA"/>
</dbReference>
<dbReference type="EMBL" id="U00096">
    <property type="protein sequence ID" value="AAC74979.1"/>
    <property type="molecule type" value="Genomic_DNA"/>
</dbReference>
<dbReference type="EMBL" id="AP009048">
    <property type="protein sequence ID" value="BAA15732.2"/>
    <property type="molecule type" value="Genomic_DNA"/>
</dbReference>
<dbReference type="PIR" id="E64954">
    <property type="entry name" value="XNECPG"/>
</dbReference>
<dbReference type="RefSeq" id="NP_416422.1">
    <property type="nucleotide sequence ID" value="NC_000913.3"/>
</dbReference>
<dbReference type="RefSeq" id="WP_001160187.1">
    <property type="nucleotide sequence ID" value="NZ_STEB01000026.1"/>
</dbReference>
<dbReference type="SMR" id="P0ABF8"/>
<dbReference type="BioGRID" id="4261587">
    <property type="interactions" value="268"/>
</dbReference>
<dbReference type="FunCoup" id="P0ABF8">
    <property type="interactions" value="720"/>
</dbReference>
<dbReference type="IntAct" id="P0ABF8">
    <property type="interactions" value="1"/>
</dbReference>
<dbReference type="STRING" id="511145.b1912"/>
<dbReference type="ChEMBL" id="CHEMBL3309009"/>
<dbReference type="jPOST" id="P0ABF8"/>
<dbReference type="PaxDb" id="511145-b1912"/>
<dbReference type="EnsemblBacteria" id="AAC74979">
    <property type="protein sequence ID" value="AAC74979"/>
    <property type="gene ID" value="b1912"/>
</dbReference>
<dbReference type="GeneID" id="93776217"/>
<dbReference type="GeneID" id="945791"/>
<dbReference type="KEGG" id="ecj:JW1897"/>
<dbReference type="KEGG" id="eco:b1912"/>
<dbReference type="KEGG" id="ecoc:C3026_10850"/>
<dbReference type="PATRIC" id="fig|1411691.4.peg.338"/>
<dbReference type="EchoBASE" id="EB0700"/>
<dbReference type="eggNOG" id="COG0558">
    <property type="taxonomic scope" value="Bacteria"/>
</dbReference>
<dbReference type="InParanoid" id="P0ABF8"/>
<dbReference type="OMA" id="WSMVYYL"/>
<dbReference type="OrthoDB" id="9796672at2"/>
<dbReference type="PhylomeDB" id="P0ABF8"/>
<dbReference type="BioCyc" id="EcoCyc:PHOSPHAGLYPSYN-MONOMER"/>
<dbReference type="BioCyc" id="MetaCyc:PHOSPHAGLYPSYN-MONOMER"/>
<dbReference type="BRENDA" id="2.7.8.5">
    <property type="organism ID" value="2026"/>
</dbReference>
<dbReference type="SABIO-RK" id="P0ABF8"/>
<dbReference type="UniPathway" id="UPA00084">
    <property type="reaction ID" value="UER00503"/>
</dbReference>
<dbReference type="PRO" id="PR:P0ABF8"/>
<dbReference type="Proteomes" id="UP000000625">
    <property type="component" value="Chromosome"/>
</dbReference>
<dbReference type="GO" id="GO:0005886">
    <property type="term" value="C:plasma membrane"/>
    <property type="evidence" value="ECO:0000314"/>
    <property type="project" value="EcoCyc"/>
</dbReference>
<dbReference type="GO" id="GO:0008444">
    <property type="term" value="F:CDP-diacylglycerol-glycerol-3-phosphate 3-phosphatidyltransferase activity"/>
    <property type="evidence" value="ECO:0000314"/>
    <property type="project" value="EcoliWiki"/>
</dbReference>
<dbReference type="GO" id="GO:0046474">
    <property type="term" value="P:glycerophospholipid biosynthetic process"/>
    <property type="evidence" value="ECO:0000318"/>
    <property type="project" value="GO_Central"/>
</dbReference>
<dbReference type="GO" id="GO:0006655">
    <property type="term" value="P:phosphatidylglycerol biosynthetic process"/>
    <property type="evidence" value="ECO:0007669"/>
    <property type="project" value="UniProtKB-UniRule"/>
</dbReference>
<dbReference type="FunFam" id="1.20.120.1760:FF:000001">
    <property type="entry name" value="CDP-diacylglycerol--glycerol-3-phosphate 3-phosphatidyltransferase"/>
    <property type="match status" value="1"/>
</dbReference>
<dbReference type="Gene3D" id="1.20.120.1760">
    <property type="match status" value="1"/>
</dbReference>
<dbReference type="HAMAP" id="MF_01437">
    <property type="entry name" value="PgsA"/>
    <property type="match status" value="1"/>
</dbReference>
<dbReference type="InterPro" id="IPR050324">
    <property type="entry name" value="CDP-alcohol_PTase-I"/>
</dbReference>
<dbReference type="InterPro" id="IPR000462">
    <property type="entry name" value="CDP-OH_P_trans"/>
</dbReference>
<dbReference type="InterPro" id="IPR043130">
    <property type="entry name" value="CDP-OH_PTrfase_TM_dom"/>
</dbReference>
<dbReference type="InterPro" id="IPR048254">
    <property type="entry name" value="CDP_ALCOHOL_P_TRANSF_CS"/>
</dbReference>
<dbReference type="InterPro" id="IPR023762">
    <property type="entry name" value="PGP_synthase_bac"/>
</dbReference>
<dbReference type="InterPro" id="IPR004570">
    <property type="entry name" value="Phosphatidylglycerol_P_synth"/>
</dbReference>
<dbReference type="NCBIfam" id="TIGR00560">
    <property type="entry name" value="pgsA"/>
    <property type="match status" value="1"/>
</dbReference>
<dbReference type="NCBIfam" id="NF008090">
    <property type="entry name" value="PRK10832.1"/>
    <property type="match status" value="1"/>
</dbReference>
<dbReference type="PANTHER" id="PTHR14269:SF62">
    <property type="entry name" value="CDP-DIACYLGLYCEROL--GLYCEROL-3-PHOSPHATE 3-PHOSPHATIDYLTRANSFERASE 1, CHLOROPLASTIC"/>
    <property type="match status" value="1"/>
</dbReference>
<dbReference type="PANTHER" id="PTHR14269">
    <property type="entry name" value="CDP-DIACYLGLYCEROL--GLYCEROL-3-PHOSPHATE 3-PHOSPHATIDYLTRANSFERASE-RELATED"/>
    <property type="match status" value="1"/>
</dbReference>
<dbReference type="Pfam" id="PF01066">
    <property type="entry name" value="CDP-OH_P_transf"/>
    <property type="match status" value="1"/>
</dbReference>
<dbReference type="PIRSF" id="PIRSF000847">
    <property type="entry name" value="Phos_ph_gly_syn"/>
    <property type="match status" value="1"/>
</dbReference>
<dbReference type="PROSITE" id="PS00379">
    <property type="entry name" value="CDP_ALCOHOL_P_TRANSF"/>
    <property type="match status" value="1"/>
</dbReference>
<proteinExistence type="evidence at protein level"/>